<comment type="function">
    <text evidence="1">Serine/threonine protein kinase which activates checkpoint signaling upon genotoxic stresses such as ionizing radiation (IR), ultraviolet light (UV), or DNA replication stalling, thereby acting as a DNA damage sensor. Recognizes the substrate consensus sequence [ST]-Q. Phosphorylates histone H2A to form H2AS128ph (gamma-H2A) at sites of DNA damage, involved in the regulation of DNA damage response mechanism. Required for the control of telomere length and genome stability (By similarity).</text>
</comment>
<comment type="catalytic activity">
    <reaction>
        <text>L-seryl-[protein] + ATP = O-phospho-L-seryl-[protein] + ADP + H(+)</text>
        <dbReference type="Rhea" id="RHEA:17989"/>
        <dbReference type="Rhea" id="RHEA-COMP:9863"/>
        <dbReference type="Rhea" id="RHEA-COMP:11604"/>
        <dbReference type="ChEBI" id="CHEBI:15378"/>
        <dbReference type="ChEBI" id="CHEBI:29999"/>
        <dbReference type="ChEBI" id="CHEBI:30616"/>
        <dbReference type="ChEBI" id="CHEBI:83421"/>
        <dbReference type="ChEBI" id="CHEBI:456216"/>
        <dbReference type="EC" id="2.7.11.1"/>
    </reaction>
</comment>
<comment type="catalytic activity">
    <reaction>
        <text>L-threonyl-[protein] + ATP = O-phospho-L-threonyl-[protein] + ADP + H(+)</text>
        <dbReference type="Rhea" id="RHEA:46608"/>
        <dbReference type="Rhea" id="RHEA-COMP:11060"/>
        <dbReference type="Rhea" id="RHEA-COMP:11605"/>
        <dbReference type="ChEBI" id="CHEBI:15378"/>
        <dbReference type="ChEBI" id="CHEBI:30013"/>
        <dbReference type="ChEBI" id="CHEBI:30616"/>
        <dbReference type="ChEBI" id="CHEBI:61977"/>
        <dbReference type="ChEBI" id="CHEBI:456216"/>
        <dbReference type="EC" id="2.7.11.1"/>
    </reaction>
</comment>
<comment type="subunit">
    <text evidence="1">Associates with DNA double-strand breaks.</text>
</comment>
<comment type="subcellular location">
    <subcellularLocation>
        <location evidence="1">Nucleus</location>
    </subcellularLocation>
    <subcellularLocation>
        <location evidence="1">Chromosome</location>
        <location evidence="1">Telomere</location>
    </subcellularLocation>
    <text evidence="1">Localizes to nuclear DNA repair foci with other DNA repair proteins in response to DNA double strand breaks.</text>
</comment>
<comment type="similarity">
    <text evidence="6">Belongs to the PI3/PI4-kinase family. ATM subfamily.</text>
</comment>
<keyword id="KW-0067">ATP-binding</keyword>
<keyword id="KW-0156">Chromatin regulator</keyword>
<keyword id="KW-0158">Chromosome</keyword>
<keyword id="KW-0227">DNA damage</keyword>
<keyword id="KW-0418">Kinase</keyword>
<keyword id="KW-0547">Nucleotide-binding</keyword>
<keyword id="KW-0539">Nucleus</keyword>
<keyword id="KW-1185">Reference proteome</keyword>
<keyword id="KW-0723">Serine/threonine-protein kinase</keyword>
<keyword id="KW-0779">Telomere</keyword>
<keyword id="KW-0808">Transferase</keyword>
<accession>Q7RZT9</accession>
<sequence>MAPATETVDFKKLIVTLNGKTITGRTSALKSLISYFKGDETGSQAESHSQKLFDDKTYHYVYEALFTCALTEKADYFSCLKSSKSDSVRNSCVKRLEGCAEALRLAVQHGAYKIKRKTATAIADHITQTLLDSDDNFFEPLLKGYVKVLSAFLNIQVNVENLAAFGGEKWESSIDLCLNAISRFLEAAEHDSGTSVRASPAPGTPATSRAGSVGPLSASVQVNGQLAIEFLACVKALTSASNAPVLRRAKRISQLVLRLLTLRHIKLGELQRDSFSILNNILVRVQTESIALTNTITTALVPVLSHCWQPRSLSRDAMSTSLKDEMLKTLYGIHLYLESLLREATDDKLLQDTEDLLDSLWSEYSRRDDKTRLQLGDVTFSAMQLHPDHPLTMVFGLRPYHLAGEQNWALLENIALLEIVYAKNSQRDRQHLEDEPDKPRKRRRVIGSSNRIHQKLMSQDPAVQLTALQLIPFLSALKHPSLEEVKGALVDLSQFISAKQGLVASWAMIACSSLAAHKTSRDPSLSAMWKQAWHIGIRSLSLPSTSRSACVLLNWILKAKLLSDHEIAGDVNQIITTADISGPAMLVDSAPVLMLTLLRIRNAIFPNASQSTSSHVIRWVFLKWNPCESAYASVHGVHAAPVDLINLLRACYEMPPLRMNTSLTVFDGPVAQFRAVQKQRHAMLRYLLLLEDEAPPEDSHKATSTDQPKREEIRAADSSSSHSAKRLILELLFPKLDELLQMVELWHKRGESDSAAPVSTDRLVSVASTCIVGAFIMPELVGLNSSMSRDLEKTVFGIVEGMIKAIAESPQSEDFFNLVLEVSAPYIPTLGEAELTHFKREEPYALRLFATVSNSLLEKTRRESPTDSDPASMDLDDEFDSQETRKSTTAGKRFLSRRDITLKHTPEAFYLDTSLRLHLLRIIRADDGELGRVPDPIVDHLLELSDEDLLSCRLFMQELFASDVVTPVDLAIRMIERIAATISNNQYTCCEAAMCTVMDIMEGFITMWTDEELEISNLVGDIYDHLIKRALPNNSLSSTAQIWFSRLLFRLLEVNPMFASQVLKLPSTRSTLLTILRDAPMDVKFFIGINLPRIFGMHVLQTHDDIIVEILEVLPGEGMEGIAFRLFVLAELACKWPTLLRRCAYHIFETPGKNQTSASHATSCLKRVSRCLNLSSPQELFTIFAPQILYTWLAIDSIDEIPYSIFGFSNLAELLSKSQSEAVGIMIMRGHETDARELAKTLKLSIQELVTQNFSKIVAYSIAQDSSLPNEVTGESRVRRIIGAEPYSSNIILNFADILAIFFEICDQEYPIEDSFRKDAANFAYAADIMDKIKAFGHLDTMLPPNQQPSYKAKFLKRQILHLVKRTNYELHDIWTPALVVFVARKLLNTIHPALGPLHACSVLRKIRVLICLAGDTALYGYPLEMLLHSLRAFVVDPECADDALGITQYLITEGSDHLIRFPSFLAGYALSCLADLRVFLESSQSSTTQESQFKATKSKAQLFHAWFSKYLANYTTNAWKDKTQKEAFEAITQSAANIRVMGNAEKGTHESKLLLEILKDWGRQHQLLNGPARSVALSILCGSFNVPPPSRLDVIQSDEEALAHGAAVWMSCGSKKLSSEYLAWAGRVIGRSYAASGDVPPELLRESRLQEYRKKSPVNFDFMESEEALLSLIEALTASSDGFRAGLAEAALRVAVSDALHENDRPLITACQKSLSESLLVASEWGELRIPRSDRFSVEHPNETEIFSAEFLESPEWAQQLTTLLAQSVPGSVALRVLPPILTKVKGFAEQAFPFIVHNVLEYELDQTQGMKQKLSEALKEWLTSTSPAARDNQKLLINTILYLRTQANPNETSIADRLHWLEVNFSIAAAAATRCGMYKVALLFAELASTEITRQSRRSSAIQGLGDTSEILLDIFENIDDPDAYYGLTQDASLSTVLARLEYENDGTKSLAFRGAQYDSHLRRRDVASQQDGQALIKALSSLGLAGLSNSLLQTQQSLDGSSTSLDSTFITARRLEIWNLPAPAATENWAVTVYKAYQSMHQASDINMVRSAVHDGLTKTLKHLTGKSLNTLTLRHQLGALATLAELDDVLNTGDLSELNGIIEDFQARSKWMMSGQYDDVSRILSCRETTLSLWSQRHNLRPARLTPANARLAQIRGMLVSSDIYRFHRATQETLNLSTTLTDLIRPSEQMGLAVDAAIRMETANSLWDQGEMISSIRMLQNIDKESPLEKQTVPVSRSDLLSKIGYQVSVARLESPDTIQKNYLEPALKELKGKSEGKEAGRVYHQFAMFCDEQLQNPDGLEDLARLQNLERGKNDEVTQLKALIASTRDSQLKNKYSSHLSKAKQWLDLDQQELRRVEQTRSEFVRLSLQNYLLSLAASDEYNNDALRFTALWLECSEDDMVNEVVKRYLSKVPTRKFAPLINQLSSRLQHQEGLFQITLIGLVYSICLDHPYHGMYQIWSGVKARSIKNDEVALSRQKATDKIARAIKKSGASAAKIYLAINATSKVYHNLAMDRDAKKYKAGHKMNIKDSKAGLEFLAAFAEFPIPPPTMQMPLLASCDYSQVPMIVKFEPQMSIASGVSAPKIITAIGSDGRQYKQLVKGGNDDLRQDAIMEQVFAAVSELLKHHRATRQRNLGIRTYKVLPLTETTGVIEFVSNTIPLHEYLMPAHEIYYPKDLKGSHCRKEIMNAQSKSVDTRVAVYRKVTERFHPVMRYFFMEWFPDPDEWFARRTAYTRTTAAISMLGHVLGLGDRHGHNILLDTKTGEVVHIDLGVAFELGRILPVPELVPFRLTRDIVDGMGITKTEGVFRRCCEFTLDALREETYSIMTILDVLRYDPLYSWSMSPLRMARLQNVRVGAGEDDVVEAEDERRAGDKKSTKNLNEPSEADRALEVVRKKLSKTLSVMATVNDLINQATDERNLAVLFCGWAAYA</sequence>
<evidence type="ECO:0000250" key="1"/>
<evidence type="ECO:0000255" key="2">
    <source>
        <dbReference type="PROSITE-ProRule" id="PRU00269"/>
    </source>
</evidence>
<evidence type="ECO:0000255" key="3">
    <source>
        <dbReference type="PROSITE-ProRule" id="PRU00534"/>
    </source>
</evidence>
<evidence type="ECO:0000255" key="4">
    <source>
        <dbReference type="PROSITE-ProRule" id="PRU00535"/>
    </source>
</evidence>
<evidence type="ECO:0000256" key="5">
    <source>
        <dbReference type="SAM" id="MobiDB-lite"/>
    </source>
</evidence>
<evidence type="ECO:0000305" key="6"/>
<proteinExistence type="inferred from homology"/>
<name>ATM_NEUCR</name>
<dbReference type="EC" id="2.7.11.1"/>
<dbReference type="EMBL" id="CM002238">
    <property type="protein sequence ID" value="EAA28509.3"/>
    <property type="molecule type" value="Genomic_DNA"/>
</dbReference>
<dbReference type="RefSeq" id="XP_957745.3">
    <property type="nucleotide sequence ID" value="XM_952652.3"/>
</dbReference>
<dbReference type="SMR" id="Q7RZT9"/>
<dbReference type="STRING" id="367110.Q7RZT9"/>
<dbReference type="PaxDb" id="5141-EFNCRP00000000181"/>
<dbReference type="EnsemblFungi" id="EAA28509">
    <property type="protein sequence ID" value="EAA28509"/>
    <property type="gene ID" value="NCU00274"/>
</dbReference>
<dbReference type="GeneID" id="3873915"/>
<dbReference type="KEGG" id="ncr:NCU00274"/>
<dbReference type="VEuPathDB" id="FungiDB:NCU00274"/>
<dbReference type="HOGENOM" id="CLU_000178_8_2_1"/>
<dbReference type="InParanoid" id="Q7RZT9"/>
<dbReference type="OrthoDB" id="381190at2759"/>
<dbReference type="Proteomes" id="UP000001805">
    <property type="component" value="Chromosome 3, Linkage Group III"/>
</dbReference>
<dbReference type="GO" id="GO:0005694">
    <property type="term" value="C:chromosome"/>
    <property type="evidence" value="ECO:0000318"/>
    <property type="project" value="GO_Central"/>
</dbReference>
<dbReference type="GO" id="GO:0000781">
    <property type="term" value="C:chromosome, telomeric region"/>
    <property type="evidence" value="ECO:0007669"/>
    <property type="project" value="UniProtKB-SubCell"/>
</dbReference>
<dbReference type="GO" id="GO:0005634">
    <property type="term" value="C:nucleus"/>
    <property type="evidence" value="ECO:0000318"/>
    <property type="project" value="GO_Central"/>
</dbReference>
<dbReference type="GO" id="GO:0005524">
    <property type="term" value="F:ATP binding"/>
    <property type="evidence" value="ECO:0007669"/>
    <property type="project" value="UniProtKB-KW"/>
</dbReference>
<dbReference type="GO" id="GO:0106310">
    <property type="term" value="F:protein serine kinase activity"/>
    <property type="evidence" value="ECO:0007669"/>
    <property type="project" value="RHEA"/>
</dbReference>
<dbReference type="GO" id="GO:0004674">
    <property type="term" value="F:protein serine/threonine kinase activity"/>
    <property type="evidence" value="ECO:0000318"/>
    <property type="project" value="GO_Central"/>
</dbReference>
<dbReference type="GO" id="GO:0006325">
    <property type="term" value="P:chromatin organization"/>
    <property type="evidence" value="ECO:0007669"/>
    <property type="project" value="UniProtKB-KW"/>
</dbReference>
<dbReference type="GO" id="GO:0000077">
    <property type="term" value="P:DNA damage checkpoint signaling"/>
    <property type="evidence" value="ECO:0000318"/>
    <property type="project" value="GO_Central"/>
</dbReference>
<dbReference type="GO" id="GO:0006302">
    <property type="term" value="P:double-strand break repair"/>
    <property type="evidence" value="ECO:0000318"/>
    <property type="project" value="GO_Central"/>
</dbReference>
<dbReference type="GO" id="GO:0019222">
    <property type="term" value="P:regulation of metabolic process"/>
    <property type="evidence" value="ECO:0007669"/>
    <property type="project" value="UniProtKB-ARBA"/>
</dbReference>
<dbReference type="GO" id="GO:0000723">
    <property type="term" value="P:telomere maintenance"/>
    <property type="evidence" value="ECO:0000318"/>
    <property type="project" value="GO_Central"/>
</dbReference>
<dbReference type="CDD" id="cd05171">
    <property type="entry name" value="PIKKc_ATM"/>
    <property type="match status" value="1"/>
</dbReference>
<dbReference type="FunFam" id="1.10.1070.11:FF:000052">
    <property type="entry name" value="Serine/threonine-protein kinase Tel1"/>
    <property type="match status" value="1"/>
</dbReference>
<dbReference type="FunFam" id="3.30.1010.10:FF:000019">
    <property type="entry name" value="Serine/threonine-protein kinase Tel1"/>
    <property type="match status" value="1"/>
</dbReference>
<dbReference type="Gene3D" id="1.10.1070.11">
    <property type="entry name" value="Phosphatidylinositol 3-/4-kinase, catalytic domain"/>
    <property type="match status" value="1"/>
</dbReference>
<dbReference type="Gene3D" id="3.30.1010.10">
    <property type="entry name" value="Phosphatidylinositol 3-kinase Catalytic Subunit, Chain A, domain 4"/>
    <property type="match status" value="1"/>
</dbReference>
<dbReference type="InterPro" id="IPR016024">
    <property type="entry name" value="ARM-type_fold"/>
</dbReference>
<dbReference type="InterPro" id="IPR038980">
    <property type="entry name" value="ATM_plant"/>
</dbReference>
<dbReference type="InterPro" id="IPR003152">
    <property type="entry name" value="FATC_dom"/>
</dbReference>
<dbReference type="InterPro" id="IPR011009">
    <property type="entry name" value="Kinase-like_dom_sf"/>
</dbReference>
<dbReference type="InterPro" id="IPR000403">
    <property type="entry name" value="PI3/4_kinase_cat_dom"/>
</dbReference>
<dbReference type="InterPro" id="IPR036940">
    <property type="entry name" value="PI3/4_kinase_cat_sf"/>
</dbReference>
<dbReference type="InterPro" id="IPR018936">
    <property type="entry name" value="PI3/4_kinase_CS"/>
</dbReference>
<dbReference type="InterPro" id="IPR003151">
    <property type="entry name" value="PIK-rel_kinase_FAT"/>
</dbReference>
<dbReference type="InterPro" id="IPR014009">
    <property type="entry name" value="PIK_FAT"/>
</dbReference>
<dbReference type="InterPro" id="IPR044107">
    <property type="entry name" value="PIKKc_ATM"/>
</dbReference>
<dbReference type="InterPro" id="IPR021668">
    <property type="entry name" value="TAN"/>
</dbReference>
<dbReference type="PANTHER" id="PTHR37079">
    <property type="entry name" value="SERINE/THREONINE-PROTEIN KINASE ATM"/>
    <property type="match status" value="1"/>
</dbReference>
<dbReference type="PANTHER" id="PTHR37079:SF4">
    <property type="entry name" value="SERINE_THREONINE-PROTEIN KINASE ATM"/>
    <property type="match status" value="1"/>
</dbReference>
<dbReference type="Pfam" id="PF02259">
    <property type="entry name" value="FAT"/>
    <property type="match status" value="1"/>
</dbReference>
<dbReference type="Pfam" id="PF02260">
    <property type="entry name" value="FATC"/>
    <property type="match status" value="1"/>
</dbReference>
<dbReference type="Pfam" id="PF00454">
    <property type="entry name" value="PI3_PI4_kinase"/>
    <property type="match status" value="1"/>
</dbReference>
<dbReference type="Pfam" id="PF11640">
    <property type="entry name" value="TAN"/>
    <property type="match status" value="1"/>
</dbReference>
<dbReference type="SMART" id="SM01343">
    <property type="entry name" value="FATC"/>
    <property type="match status" value="1"/>
</dbReference>
<dbReference type="SMART" id="SM00146">
    <property type="entry name" value="PI3Kc"/>
    <property type="match status" value="1"/>
</dbReference>
<dbReference type="SMART" id="SM01342">
    <property type="entry name" value="TAN"/>
    <property type="match status" value="1"/>
</dbReference>
<dbReference type="SUPFAM" id="SSF48371">
    <property type="entry name" value="ARM repeat"/>
    <property type="match status" value="1"/>
</dbReference>
<dbReference type="SUPFAM" id="SSF56112">
    <property type="entry name" value="Protein kinase-like (PK-like)"/>
    <property type="match status" value="1"/>
</dbReference>
<dbReference type="PROSITE" id="PS51189">
    <property type="entry name" value="FAT"/>
    <property type="match status" value="1"/>
</dbReference>
<dbReference type="PROSITE" id="PS51190">
    <property type="entry name" value="FATC"/>
    <property type="match status" value="1"/>
</dbReference>
<dbReference type="PROSITE" id="PS00915">
    <property type="entry name" value="PI3_4_KINASE_1"/>
    <property type="match status" value="1"/>
</dbReference>
<dbReference type="PROSITE" id="PS00916">
    <property type="entry name" value="PI3_4_KINASE_2"/>
    <property type="match status" value="1"/>
</dbReference>
<dbReference type="PROSITE" id="PS50290">
    <property type="entry name" value="PI3_4_KINASE_3"/>
    <property type="match status" value="1"/>
</dbReference>
<organism>
    <name type="scientific">Neurospora crassa (strain ATCC 24698 / 74-OR23-1A / CBS 708.71 / DSM 1257 / FGSC 987)</name>
    <dbReference type="NCBI Taxonomy" id="367110"/>
    <lineage>
        <taxon>Eukaryota</taxon>
        <taxon>Fungi</taxon>
        <taxon>Dikarya</taxon>
        <taxon>Ascomycota</taxon>
        <taxon>Pezizomycotina</taxon>
        <taxon>Sordariomycetes</taxon>
        <taxon>Sordariomycetidae</taxon>
        <taxon>Sordariales</taxon>
        <taxon>Sordariaceae</taxon>
        <taxon>Neurospora</taxon>
    </lineage>
</organism>
<feature type="chain" id="PRO_0000227705" description="Serine/threonine-protein kinase tel1">
    <location>
        <begin position="1"/>
        <end position="2939"/>
    </location>
</feature>
<feature type="domain" description="FAT" evidence="3">
    <location>
        <begin position="1869"/>
        <end position="2471"/>
    </location>
</feature>
<feature type="domain" description="PI3K/PI4K catalytic" evidence="2">
    <location>
        <begin position="2577"/>
        <end position="2890"/>
    </location>
</feature>
<feature type="domain" description="FATC" evidence="3 4">
    <location>
        <begin position="2907"/>
        <end position="2939"/>
    </location>
</feature>
<feature type="region of interest" description="Disordered" evidence="5">
    <location>
        <begin position="193"/>
        <end position="212"/>
    </location>
</feature>
<feature type="region of interest" description="Disordered" evidence="5">
    <location>
        <begin position="695"/>
        <end position="718"/>
    </location>
</feature>
<feature type="region of interest" description="Disordered" evidence="5">
    <location>
        <begin position="859"/>
        <end position="886"/>
    </location>
</feature>
<feature type="region of interest" description="G-loop" evidence="2">
    <location>
        <begin position="2583"/>
        <end position="2589"/>
    </location>
</feature>
<feature type="region of interest" description="Catalytic loop" evidence="2">
    <location>
        <begin position="2755"/>
        <end position="2763"/>
    </location>
</feature>
<feature type="region of interest" description="Activation loop" evidence="2">
    <location>
        <begin position="2775"/>
        <end position="2799"/>
    </location>
</feature>
<feature type="region of interest" description="Disordered" evidence="5">
    <location>
        <begin position="2869"/>
        <end position="2894"/>
    </location>
</feature>
<feature type="compositionally biased region" description="Basic and acidic residues" evidence="5">
    <location>
        <begin position="697"/>
        <end position="715"/>
    </location>
</feature>
<feature type="compositionally biased region" description="Basic and acidic residues" evidence="5">
    <location>
        <begin position="2875"/>
        <end position="2884"/>
    </location>
</feature>
<protein>
    <recommendedName>
        <fullName>Serine/threonine-protein kinase tel1</fullName>
        <ecNumber>2.7.11.1</ecNumber>
    </recommendedName>
    <alternativeName>
        <fullName>ATM homolog</fullName>
    </alternativeName>
    <alternativeName>
        <fullName>DNA-damage checkpoint kinase tel1</fullName>
    </alternativeName>
    <alternativeName>
        <fullName>Telomere length regulation protein 1</fullName>
    </alternativeName>
</protein>
<reference key="1">
    <citation type="journal article" date="2003" name="Nature">
        <title>The genome sequence of the filamentous fungus Neurospora crassa.</title>
        <authorList>
            <person name="Galagan J.E."/>
            <person name="Calvo S.E."/>
            <person name="Borkovich K.A."/>
            <person name="Selker E.U."/>
            <person name="Read N.D."/>
            <person name="Jaffe D.B."/>
            <person name="FitzHugh W."/>
            <person name="Ma L.-J."/>
            <person name="Smirnov S."/>
            <person name="Purcell S."/>
            <person name="Rehman B."/>
            <person name="Elkins T."/>
            <person name="Engels R."/>
            <person name="Wang S."/>
            <person name="Nielsen C.B."/>
            <person name="Butler J."/>
            <person name="Endrizzi M."/>
            <person name="Qui D."/>
            <person name="Ianakiev P."/>
            <person name="Bell-Pedersen D."/>
            <person name="Nelson M.A."/>
            <person name="Werner-Washburne M."/>
            <person name="Selitrennikoff C.P."/>
            <person name="Kinsey J.A."/>
            <person name="Braun E.L."/>
            <person name="Zelter A."/>
            <person name="Schulte U."/>
            <person name="Kothe G.O."/>
            <person name="Jedd G."/>
            <person name="Mewes H.-W."/>
            <person name="Staben C."/>
            <person name="Marcotte E."/>
            <person name="Greenberg D."/>
            <person name="Roy A."/>
            <person name="Foley K."/>
            <person name="Naylor J."/>
            <person name="Stange-Thomann N."/>
            <person name="Barrett R."/>
            <person name="Gnerre S."/>
            <person name="Kamal M."/>
            <person name="Kamvysselis M."/>
            <person name="Mauceli E.W."/>
            <person name="Bielke C."/>
            <person name="Rudd S."/>
            <person name="Frishman D."/>
            <person name="Krystofova S."/>
            <person name="Rasmussen C."/>
            <person name="Metzenberg R.L."/>
            <person name="Perkins D.D."/>
            <person name="Kroken S."/>
            <person name="Cogoni C."/>
            <person name="Macino G."/>
            <person name="Catcheside D.E.A."/>
            <person name="Li W."/>
            <person name="Pratt R.J."/>
            <person name="Osmani S.A."/>
            <person name="DeSouza C.P.C."/>
            <person name="Glass N.L."/>
            <person name="Orbach M.J."/>
            <person name="Berglund J.A."/>
            <person name="Voelker R."/>
            <person name="Yarden O."/>
            <person name="Plamann M."/>
            <person name="Seiler S."/>
            <person name="Dunlap J.C."/>
            <person name="Radford A."/>
            <person name="Aramayo R."/>
            <person name="Natvig D.O."/>
            <person name="Alex L.A."/>
            <person name="Mannhaupt G."/>
            <person name="Ebbole D.J."/>
            <person name="Freitag M."/>
            <person name="Paulsen I."/>
            <person name="Sachs M.S."/>
            <person name="Lander E.S."/>
            <person name="Nusbaum C."/>
            <person name="Birren B.W."/>
        </authorList>
    </citation>
    <scope>NUCLEOTIDE SEQUENCE [LARGE SCALE GENOMIC DNA]</scope>
    <source>
        <strain>ATCC 24698 / 74-OR23-1A / CBS 708.71 / DSM 1257 / FGSC 987</strain>
    </source>
</reference>
<gene>
    <name type="primary">mus-21</name>
    <name type="synonym">tel1</name>
    <name type="ORF">NCU00274</name>
</gene>